<comment type="function">
    <text evidence="15">Serine protease that hydrolyzes the inactive zymogen hepatocyte growth factor (HGFsc) to an activated disulfide-linked heterodimer, then initiating hepatocyte growth factor receptor signaling pathway.</text>
</comment>
<comment type="subunit">
    <text evidence="10 12 14">Heterodimer of a short chain and a long chain linked by a disulfide bond.</text>
</comment>
<comment type="interaction">
    <interactant intactId="EBI-1041722">
        <id>Q04756</id>
    </interactant>
    <interactant intactId="EBI-743771">
        <id>Q92624</id>
        <label>APPBP2</label>
    </interactant>
    <organismsDiffer>false</organismsDiffer>
    <experiments>3</experiments>
</comment>
<comment type="interaction">
    <interactant intactId="EBI-1041722">
        <id>Q04756</id>
    </interactant>
    <interactant intactId="EBI-10175300">
        <id>Q8TD31-3</id>
        <label>CCHCR1</label>
    </interactant>
    <organismsDiffer>false</organismsDiffer>
    <experiments>3</experiments>
</comment>
<comment type="interaction">
    <interactant intactId="EBI-1041722">
        <id>Q04756</id>
    </interactant>
    <interactant intactId="EBI-712073">
        <id>Q8NBJ4</id>
        <label>GOLM1</label>
    </interactant>
    <organismsDiffer>false</organismsDiffer>
    <experiments>3</experiments>
</comment>
<comment type="interaction">
    <interactant intactId="EBI-1041722">
        <id>Q04756</id>
    </interactant>
    <interactant intactId="EBI-8644112">
        <id>Q9BRI3</id>
        <label>SLC30A2</label>
    </interactant>
    <organismsDiffer>false</organismsDiffer>
    <experiments>3</experiments>
</comment>
<comment type="interaction">
    <interactant intactId="EBI-1041722">
        <id>Q04756</id>
    </interactant>
    <interactant intactId="EBI-953990">
        <id>O43278</id>
        <label>SPINT1</label>
    </interactant>
    <organismsDiffer>false</organismsDiffer>
    <experiments>2</experiments>
</comment>
<comment type="interaction">
    <interactant intactId="EBI-1041722">
        <id>Q04756</id>
    </interactant>
    <interactant intactId="EBI-18323486">
        <id>Q86XK7</id>
        <label>VSIG1</label>
    </interactant>
    <organismsDiffer>false</organismsDiffer>
    <experiments>3</experiments>
</comment>
<comment type="subcellular location">
    <subcellularLocation>
        <location evidence="14 15">Secreted</location>
    </subcellularLocation>
    <text evidence="14 15">Exists as an inactive zymogen in plasma (PubMed:8226803). Exists as an active heterodimeric form in serum (PubMed:7683665).</text>
</comment>
<comment type="tissue specificity">
    <text>Liver.</text>
</comment>
<comment type="PTM">
    <text evidence="14 15">The active form of HGFAC presents in the serum is derived from the COOH-terminal region of the precursor by the cleavage of bonds between Arg-372 and Val-373 and Arg-407 and Ile-408.</text>
</comment>
<comment type="similarity">
    <text evidence="4">Belongs to the peptidase S1 family.</text>
</comment>
<comment type="caution">
    <text evidence="16">It is uncertain whether Met-1 is the initiator.</text>
</comment>
<protein>
    <recommendedName>
        <fullName evidence="16">Hepatocyte growth factor activator serine protease</fullName>
        <shortName>HGF activator</shortName>
        <shortName>HGFA</shortName>
        <shortName>HGFA serine protease</shortName>
        <ecNumber evidence="15">3.4.21.-</ecNumber>
    </recommendedName>
    <alternativeName>
        <fullName evidence="16">Serine protease HGFAC</fullName>
    </alternativeName>
    <component>
        <recommendedName>
            <fullName>Hepatocyte growth factor activator short chain</fullName>
        </recommendedName>
    </component>
    <component>
        <recommendedName>
            <fullName>Hepatocyte growth factor activator long chain</fullName>
        </recommendedName>
    </component>
</protein>
<sequence>MGRWAWVPSPWPPPGLGPFLLLLLLLLLLPRGFQPQPGGNRTESPEPNATATPAIPTILVTSVTSETPATSAPEAEGPQSGGLPPPPRAVPSSSSPQAQALTEDGRPCRFPFRYGGRMLHACTSEGSAHRKWCATTHNYDRDRAWGYCVEATPPPGGPAALDPCASGPCLNGGSCSNTQDPQSYHCSCPRAFTGKDCGTEKCFDETRYEYLEGGDRWARVRQGHVEQCECFGGRTWCEGTRHTACLSSPCLNGGTCHLIVATGTTVCACPPGFAGRLCNIEPDERCFLGNGTGYRGVASTSASGLSCLAWNSDLLYQELHVDSVGAAALLGLGPHAYCRNPDNDERPWCYVVKDSALSWEYCRLEACESLTRVQLSPDLLATLPEPASPGRQACGRRHKKRTFLRPRIIGGSSSLPGSHPWLAAIYIGDSFCAGSLVHTCWVVSAAHCFSHSPPRDSVSVVLGQHFFNRTTDVTQTFGIEKYIPYTLYSVFNPSDHDLVLIRLKKKGDRCATRSQFVQPICLPEPGSTFPAGHKCQIAGWGHLDENVSGYSSSLREALVPLVADHKCSSPEVYGADISPNMLCAGYFDCKSDACQGDSGGPLACEKNGVAYLYGIISWGDGCGRLHKPGVYTRVANYVDWINDRIRPPRRLVAPS</sequence>
<feature type="signal peptide" evidence="8">
    <location>
        <begin position="1"/>
        <end position="35"/>
    </location>
</feature>
<feature type="propeptide" id="PRO_0000027911" description="Removed in mature form" evidence="14">
    <location>
        <begin position="36"/>
        <end position="372"/>
    </location>
</feature>
<feature type="chain" id="PRO_0000027912" description="Hepatocyte growth factor activator short chain" evidence="14 15">
    <location>
        <begin position="373"/>
        <end position="407"/>
    </location>
</feature>
<feature type="chain" id="PRO_0000027913" description="Hepatocyte growth factor activator long chain" evidence="14 15">
    <location>
        <begin position="408"/>
        <end position="655"/>
    </location>
</feature>
<feature type="domain" description="Fibronectin type-II" evidence="5 6">
    <location>
        <begin position="103"/>
        <end position="150"/>
    </location>
</feature>
<feature type="domain" description="EGF-like 1" evidence="2">
    <location>
        <begin position="160"/>
        <end position="198"/>
    </location>
</feature>
<feature type="domain" description="Fibronectin type-I" evidence="5">
    <location>
        <begin position="200"/>
        <end position="240"/>
    </location>
</feature>
<feature type="domain" description="EGF-like 2" evidence="2">
    <location>
        <begin position="241"/>
        <end position="279"/>
    </location>
</feature>
<feature type="domain" description="Kringle" evidence="3">
    <location>
        <begin position="286"/>
        <end position="367"/>
    </location>
</feature>
<feature type="domain" description="Peptidase S1" evidence="4">
    <location>
        <begin position="408"/>
        <end position="646"/>
    </location>
</feature>
<feature type="region of interest" description="Disordered" evidence="7">
    <location>
        <begin position="64"/>
        <end position="102"/>
    </location>
</feature>
<feature type="active site" description="Charge relay system" evidence="4 10">
    <location>
        <position position="447"/>
    </location>
</feature>
<feature type="active site" description="Charge relay system" evidence="4 10">
    <location>
        <position position="497"/>
    </location>
</feature>
<feature type="active site" description="Charge relay system" evidence="4 10">
    <location>
        <position position="598"/>
    </location>
</feature>
<feature type="site" description="Cleavage" evidence="14 15">
    <location>
        <begin position="372"/>
        <end position="373"/>
    </location>
</feature>
<feature type="site" description="Cleavage" evidence="14 15">
    <location>
        <begin position="407"/>
        <end position="408"/>
    </location>
</feature>
<feature type="glycosylation site" description="N-linked (GlcNAc...) asparagine" evidence="1">
    <location>
        <position position="40"/>
    </location>
</feature>
<feature type="glycosylation site" description="N-linked (GlcNAc...) asparagine" evidence="1">
    <location>
        <position position="48"/>
    </location>
</feature>
<feature type="glycosylation site" description="N-linked (GlcNAc...) asparagine" evidence="1">
    <location>
        <position position="290"/>
    </location>
</feature>
<feature type="glycosylation site" description="N-linked (GlcNAc...) asparagine" evidence="10 11 13 18">
    <location>
        <position position="468"/>
    </location>
</feature>
<feature type="glycosylation site" description="N-linked (GlcNAc...) asparagine" evidence="1">
    <location>
        <position position="492"/>
    </location>
</feature>
<feature type="glycosylation site" description="N-linked (GlcNAc...) asparagine" evidence="1">
    <location>
        <position position="546"/>
    </location>
</feature>
<feature type="disulfide bond" evidence="6">
    <location>
        <begin position="108"/>
        <end position="133"/>
    </location>
</feature>
<feature type="disulfide bond" evidence="6">
    <location>
        <begin position="122"/>
        <end position="148"/>
    </location>
</feature>
<feature type="disulfide bond" evidence="2">
    <location>
        <begin position="164"/>
        <end position="175"/>
    </location>
</feature>
<feature type="disulfide bond" evidence="2">
    <location>
        <begin position="169"/>
        <end position="186"/>
    </location>
</feature>
<feature type="disulfide bond" evidence="2">
    <location>
        <begin position="188"/>
        <end position="197"/>
    </location>
</feature>
<feature type="disulfide bond" evidence="5">
    <location>
        <begin position="202"/>
        <end position="230"/>
    </location>
</feature>
<feature type="disulfide bond" evidence="5">
    <location>
        <begin position="228"/>
        <end position="237"/>
    </location>
</feature>
<feature type="disulfide bond" evidence="2">
    <location>
        <begin position="245"/>
        <end position="256"/>
    </location>
</feature>
<feature type="disulfide bond" evidence="2">
    <location>
        <begin position="250"/>
        <end position="267"/>
    </location>
</feature>
<feature type="disulfide bond" evidence="2">
    <location>
        <begin position="269"/>
        <end position="278"/>
    </location>
</feature>
<feature type="disulfide bond" evidence="3">
    <location>
        <begin position="286"/>
        <end position="367"/>
    </location>
</feature>
<feature type="disulfide bond" evidence="3">
    <location>
        <begin position="307"/>
        <end position="349"/>
    </location>
</feature>
<feature type="disulfide bond" evidence="3">
    <location>
        <begin position="338"/>
        <end position="362"/>
    </location>
</feature>
<feature type="disulfide bond" evidence="3 10 18 19">
    <location>
        <begin position="394"/>
        <end position="521"/>
    </location>
</feature>
<feature type="disulfide bond" description="Interchain (with C-521)" evidence="3 12 21">
    <location>
        <position position="394"/>
    </location>
</feature>
<feature type="disulfide bond" evidence="3 10 12 18 19 20 21">
    <location>
        <begin position="432"/>
        <end position="448"/>
    </location>
</feature>
<feature type="disulfide bond" evidence="3 10 12 18 19 20 21">
    <location>
        <begin position="440"/>
        <end position="510"/>
    </location>
</feature>
<feature type="disulfide bond" description="Interchain (with C-394)" evidence="3 12 21">
    <location>
        <position position="521"/>
    </location>
</feature>
<feature type="disulfide bond" evidence="3 10 12 18 19 20 21">
    <location>
        <begin position="535"/>
        <end position="604"/>
    </location>
</feature>
<feature type="disulfide bond" evidence="3 10 12 18 19 20 21">
    <location>
        <begin position="567"/>
        <end position="583"/>
    </location>
</feature>
<feature type="disulfide bond" evidence="3 10 12 19 20 21">
    <location>
        <begin position="594"/>
        <end position="622"/>
    </location>
</feature>
<feature type="sequence variant" id="VAR_051851" description="In dbSNP:rs3748034.">
    <original>A</original>
    <variation>S</variation>
    <location>
        <position position="218"/>
    </location>
</feature>
<feature type="sequence variant" id="VAR_033651" description="In dbSNP:rs16844370.">
    <original>V</original>
    <variation>M</variation>
    <location>
        <position position="225"/>
    </location>
</feature>
<feature type="sequence variant" id="VAR_033652" description="In dbSNP:rs1987546." evidence="9">
    <original>F</original>
    <variation>L</variation>
    <location>
        <position position="231"/>
    </location>
</feature>
<feature type="sequence variant" id="VAR_024294" description="In dbSNP:rs16844401.">
    <original>R</original>
    <variation>H</variation>
    <location>
        <position position="509"/>
    </location>
</feature>
<feature type="sequence variant" id="VAR_024295" description="In dbSNP:rs2498323.">
    <original>R</original>
    <variation>Q</variation>
    <location>
        <position position="644"/>
    </location>
</feature>
<feature type="strand" evidence="24">
    <location>
        <begin position="422"/>
        <end position="427"/>
    </location>
</feature>
<feature type="strand" evidence="24">
    <location>
        <begin position="430"/>
        <end position="438"/>
    </location>
</feature>
<feature type="strand" evidence="24">
    <location>
        <begin position="441"/>
        <end position="444"/>
    </location>
</feature>
<feature type="helix" evidence="24">
    <location>
        <begin position="446"/>
        <end position="449"/>
    </location>
</feature>
<feature type="helix" evidence="24">
    <location>
        <begin position="455"/>
        <end position="457"/>
    </location>
</feature>
<feature type="strand" evidence="24">
    <location>
        <begin position="458"/>
        <end position="463"/>
    </location>
</feature>
<feature type="strand" evidence="24">
    <location>
        <begin position="475"/>
        <end position="477"/>
    </location>
</feature>
<feature type="strand" evidence="24">
    <location>
        <begin position="479"/>
        <end position="484"/>
    </location>
</feature>
<feature type="strand" evidence="25">
    <location>
        <begin position="490"/>
        <end position="492"/>
    </location>
</feature>
<feature type="turn" evidence="24">
    <location>
        <begin position="493"/>
        <end position="496"/>
    </location>
</feature>
<feature type="strand" evidence="24">
    <location>
        <begin position="499"/>
        <end position="503"/>
    </location>
</feature>
<feature type="strand" evidence="24">
    <location>
        <begin position="506"/>
        <end position="508"/>
    </location>
</feature>
<feature type="strand" evidence="23">
    <location>
        <begin position="509"/>
        <end position="511"/>
    </location>
</feature>
<feature type="strand" evidence="22">
    <location>
        <begin position="514"/>
        <end position="516"/>
    </location>
</feature>
<feature type="strand" evidence="24">
    <location>
        <begin position="534"/>
        <end position="540"/>
    </location>
</feature>
<feature type="strand" evidence="24">
    <location>
        <begin position="543"/>
        <end position="546"/>
    </location>
</feature>
<feature type="strand" evidence="24">
    <location>
        <begin position="555"/>
        <end position="561"/>
    </location>
</feature>
<feature type="helix" evidence="24">
    <location>
        <begin position="564"/>
        <end position="567"/>
    </location>
</feature>
<feature type="turn" evidence="24">
    <location>
        <begin position="570"/>
        <end position="573"/>
    </location>
</feature>
<feature type="helix" evidence="24">
    <location>
        <begin position="574"/>
        <end position="576"/>
    </location>
</feature>
<feature type="strand" evidence="24">
    <location>
        <begin position="581"/>
        <end position="585"/>
    </location>
</feature>
<feature type="strand" evidence="24">
    <location>
        <begin position="587"/>
        <end position="589"/>
    </location>
</feature>
<feature type="turn" evidence="22">
    <location>
        <begin position="595"/>
        <end position="599"/>
    </location>
</feature>
<feature type="strand" evidence="24">
    <location>
        <begin position="601"/>
        <end position="606"/>
    </location>
</feature>
<feature type="strand" evidence="24">
    <location>
        <begin position="609"/>
        <end position="618"/>
    </location>
</feature>
<feature type="turn" evidence="24">
    <location>
        <begin position="621"/>
        <end position="623"/>
    </location>
</feature>
<feature type="strand" evidence="22">
    <location>
        <begin position="625"/>
        <end position="627"/>
    </location>
</feature>
<feature type="strand" evidence="24">
    <location>
        <begin position="629"/>
        <end position="633"/>
    </location>
</feature>
<feature type="helix" evidence="24">
    <location>
        <begin position="634"/>
        <end position="637"/>
    </location>
</feature>
<feature type="helix" evidence="24">
    <location>
        <begin position="638"/>
        <end position="645"/>
    </location>
</feature>
<accession>Q04756</accession>
<accession>Q14726</accession>
<accession>Q2M1W7</accession>
<accession>Q53X47</accession>
<evidence type="ECO:0000255" key="1"/>
<evidence type="ECO:0000255" key="2">
    <source>
        <dbReference type="PROSITE-ProRule" id="PRU00076"/>
    </source>
</evidence>
<evidence type="ECO:0000255" key="3">
    <source>
        <dbReference type="PROSITE-ProRule" id="PRU00121"/>
    </source>
</evidence>
<evidence type="ECO:0000255" key="4">
    <source>
        <dbReference type="PROSITE-ProRule" id="PRU00274"/>
    </source>
</evidence>
<evidence type="ECO:0000255" key="5">
    <source>
        <dbReference type="PROSITE-ProRule" id="PRU00478"/>
    </source>
</evidence>
<evidence type="ECO:0000255" key="6">
    <source>
        <dbReference type="PROSITE-ProRule" id="PRU00479"/>
    </source>
</evidence>
<evidence type="ECO:0000256" key="7">
    <source>
        <dbReference type="SAM" id="MobiDB-lite"/>
    </source>
</evidence>
<evidence type="ECO:0000269" key="8">
    <source>
    </source>
</evidence>
<evidence type="ECO:0000269" key="9">
    <source>
    </source>
</evidence>
<evidence type="ECO:0000269" key="10">
    <source>
    </source>
</evidence>
<evidence type="ECO:0000269" key="11">
    <source>
    </source>
</evidence>
<evidence type="ECO:0000269" key="12">
    <source>
    </source>
</evidence>
<evidence type="ECO:0000269" key="13">
    <source>
    </source>
</evidence>
<evidence type="ECO:0000269" key="14">
    <source>
    </source>
</evidence>
<evidence type="ECO:0000269" key="15">
    <source>
    </source>
</evidence>
<evidence type="ECO:0000305" key="16"/>
<evidence type="ECO:0000312" key="17">
    <source>
        <dbReference type="HGNC" id="HGNC:4894"/>
    </source>
</evidence>
<evidence type="ECO:0007744" key="18">
    <source>
        <dbReference type="PDB" id="1YBW"/>
    </source>
</evidence>
<evidence type="ECO:0007744" key="19">
    <source>
        <dbReference type="PDB" id="1YC0"/>
    </source>
</evidence>
<evidence type="ECO:0007744" key="20">
    <source>
        <dbReference type="PDB" id="2R0K"/>
    </source>
</evidence>
<evidence type="ECO:0007744" key="21">
    <source>
        <dbReference type="PDB" id="2R0L"/>
    </source>
</evidence>
<evidence type="ECO:0007829" key="22">
    <source>
        <dbReference type="PDB" id="1YBW"/>
    </source>
</evidence>
<evidence type="ECO:0007829" key="23">
    <source>
        <dbReference type="PDB" id="1YC0"/>
    </source>
</evidence>
<evidence type="ECO:0007829" key="24">
    <source>
        <dbReference type="PDB" id="2R0L"/>
    </source>
</evidence>
<evidence type="ECO:0007829" key="25">
    <source>
        <dbReference type="PDB" id="3K2U"/>
    </source>
</evidence>
<dbReference type="EC" id="3.4.21.-" evidence="15"/>
<dbReference type="EMBL" id="D14012">
    <property type="protein sequence ID" value="BAA03113.1"/>
    <property type="molecule type" value="mRNA"/>
</dbReference>
<dbReference type="EMBL" id="BC112190">
    <property type="protein sequence ID" value="AAI12191.1"/>
    <property type="molecule type" value="mRNA"/>
</dbReference>
<dbReference type="EMBL" id="D50030">
    <property type="protein sequence ID" value="BAA74450.1"/>
    <property type="molecule type" value="Genomic_DNA"/>
</dbReference>
<dbReference type="EMBL" id="AL590235">
    <property type="status" value="NOT_ANNOTATED_CDS"/>
    <property type="molecule type" value="Genomic_DNA"/>
</dbReference>
<dbReference type="EMBL" id="CH471131">
    <property type="protein sequence ID" value="EAW82464.1"/>
    <property type="molecule type" value="Genomic_DNA"/>
</dbReference>
<dbReference type="EMBL" id="BC112192">
    <property type="protein sequence ID" value="AAI12193.1"/>
    <property type="molecule type" value="mRNA"/>
</dbReference>
<dbReference type="CCDS" id="CCDS3369.1"/>
<dbReference type="PIR" id="A46688">
    <property type="entry name" value="A46688"/>
</dbReference>
<dbReference type="RefSeq" id="NP_001284368.1">
    <property type="nucleotide sequence ID" value="NM_001297439.1"/>
</dbReference>
<dbReference type="RefSeq" id="NP_001519.1">
    <property type="nucleotide sequence ID" value="NM_001528.4"/>
</dbReference>
<dbReference type="PDB" id="1YBW">
    <property type="method" value="X-ray"/>
    <property type="resolution" value="2.70 A"/>
    <property type="chains" value="A/B=373-655"/>
</dbReference>
<dbReference type="PDB" id="1YC0">
    <property type="method" value="X-ray"/>
    <property type="resolution" value="2.60 A"/>
    <property type="chains" value="A=373-655"/>
</dbReference>
<dbReference type="PDB" id="2R0K">
    <property type="method" value="X-ray"/>
    <property type="resolution" value="3.51 A"/>
    <property type="chains" value="A=373-655"/>
</dbReference>
<dbReference type="PDB" id="2R0L">
    <property type="method" value="X-ray"/>
    <property type="resolution" value="2.20 A"/>
    <property type="chains" value="A=408-655, B=373-407"/>
</dbReference>
<dbReference type="PDB" id="2WUB">
    <property type="method" value="X-ray"/>
    <property type="resolution" value="2.90 A"/>
    <property type="chains" value="A/C=408-655, B/D=373-407"/>
</dbReference>
<dbReference type="PDB" id="2WUC">
    <property type="method" value="X-ray"/>
    <property type="resolution" value="2.70 A"/>
    <property type="chains" value="A=408-654, B=373-407"/>
</dbReference>
<dbReference type="PDB" id="3K2U">
    <property type="method" value="X-ray"/>
    <property type="resolution" value="2.35 A"/>
    <property type="chains" value="A=408-655, B=373-407"/>
</dbReference>
<dbReference type="PDBsum" id="1YBW"/>
<dbReference type="PDBsum" id="1YC0"/>
<dbReference type="PDBsum" id="2R0K"/>
<dbReference type="PDBsum" id="2R0L"/>
<dbReference type="PDBsum" id="2WUB"/>
<dbReference type="PDBsum" id="2WUC"/>
<dbReference type="PDBsum" id="3K2U"/>
<dbReference type="SMR" id="Q04756"/>
<dbReference type="BioGRID" id="109331">
    <property type="interactions" value="25"/>
</dbReference>
<dbReference type="DIP" id="DIP-6022N"/>
<dbReference type="FunCoup" id="Q04756">
    <property type="interactions" value="343"/>
</dbReference>
<dbReference type="IntAct" id="Q04756">
    <property type="interactions" value="21"/>
</dbReference>
<dbReference type="STRING" id="9606.ENSP00000421801"/>
<dbReference type="BindingDB" id="Q04756"/>
<dbReference type="ChEMBL" id="CHEMBL3351190"/>
<dbReference type="DrugCentral" id="Q04756"/>
<dbReference type="MEROPS" id="S01.228"/>
<dbReference type="GlyConnect" id="1309">
    <property type="glycosylation" value="13 N-Linked glycans (4 sites)"/>
</dbReference>
<dbReference type="GlyCosmos" id="Q04756">
    <property type="glycosylation" value="10 sites, 17 glycans"/>
</dbReference>
<dbReference type="GlyGen" id="Q04756">
    <property type="glycosylation" value="12 sites, 16 N-linked glycans (4 sites), 4 O-linked glycans (6 sites)"/>
</dbReference>
<dbReference type="iPTMnet" id="Q04756"/>
<dbReference type="PhosphoSitePlus" id="Q04756"/>
<dbReference type="BioMuta" id="HGFAC"/>
<dbReference type="DMDM" id="547643"/>
<dbReference type="jPOST" id="Q04756"/>
<dbReference type="MassIVE" id="Q04756"/>
<dbReference type="PaxDb" id="9606-ENSP00000421801"/>
<dbReference type="PeptideAtlas" id="Q04756"/>
<dbReference type="ProteomicsDB" id="58278"/>
<dbReference type="ABCD" id="Q04756">
    <property type="antibodies" value="3 sequenced antibodies"/>
</dbReference>
<dbReference type="Antibodypedia" id="3925">
    <property type="antibodies" value="191 antibodies from 23 providers"/>
</dbReference>
<dbReference type="DNASU" id="3083"/>
<dbReference type="Ensembl" id="ENST00000382774.8">
    <property type="protein sequence ID" value="ENSP00000372224.4"/>
    <property type="gene ID" value="ENSG00000109758.9"/>
</dbReference>
<dbReference type="GeneID" id="3083"/>
<dbReference type="KEGG" id="hsa:3083"/>
<dbReference type="MANE-Select" id="ENST00000382774.8">
    <property type="protein sequence ID" value="ENSP00000372224.4"/>
    <property type="RefSeq nucleotide sequence ID" value="NM_001528.4"/>
    <property type="RefSeq protein sequence ID" value="NP_001519.1"/>
</dbReference>
<dbReference type="UCSC" id="uc003ghc.4">
    <property type="organism name" value="human"/>
</dbReference>
<dbReference type="AGR" id="HGNC:4894"/>
<dbReference type="CTD" id="3083"/>
<dbReference type="DisGeNET" id="3083"/>
<dbReference type="GeneCards" id="HGFAC"/>
<dbReference type="HGNC" id="HGNC:4894">
    <property type="gene designation" value="HGFAC"/>
</dbReference>
<dbReference type="HPA" id="ENSG00000109758">
    <property type="expression patterns" value="Tissue enriched (liver)"/>
</dbReference>
<dbReference type="MIM" id="604552">
    <property type="type" value="gene"/>
</dbReference>
<dbReference type="neXtProt" id="NX_Q04756"/>
<dbReference type="OpenTargets" id="ENSG00000109758"/>
<dbReference type="PharmGKB" id="PA29270"/>
<dbReference type="VEuPathDB" id="HostDB:ENSG00000109758"/>
<dbReference type="eggNOG" id="KOG1217">
    <property type="taxonomic scope" value="Eukaryota"/>
</dbReference>
<dbReference type="eggNOG" id="KOG3627">
    <property type="taxonomic scope" value="Eukaryota"/>
</dbReference>
<dbReference type="GeneTree" id="ENSGT00940000159778"/>
<dbReference type="InParanoid" id="Q04756"/>
<dbReference type="OrthoDB" id="9925451at2759"/>
<dbReference type="PAN-GO" id="Q04756">
    <property type="GO annotations" value="5 GO annotations based on evolutionary models"/>
</dbReference>
<dbReference type="PhylomeDB" id="Q04756"/>
<dbReference type="TreeFam" id="TF329901"/>
<dbReference type="PathwayCommons" id="Q04756"/>
<dbReference type="Reactome" id="R-HSA-6806942">
    <property type="pathway name" value="MET Receptor Activation"/>
</dbReference>
<dbReference type="SignaLink" id="Q04756"/>
<dbReference type="BioGRID-ORCS" id="3083">
    <property type="hits" value="3 hits in 1145 CRISPR screens"/>
</dbReference>
<dbReference type="ChiTaRS" id="HGFAC">
    <property type="organism name" value="human"/>
</dbReference>
<dbReference type="EvolutionaryTrace" id="Q04756"/>
<dbReference type="GeneWiki" id="HGFAC"/>
<dbReference type="GenomeRNAi" id="3083"/>
<dbReference type="Pharos" id="Q04756">
    <property type="development level" value="Tchem"/>
</dbReference>
<dbReference type="PRO" id="PR:Q04756"/>
<dbReference type="Proteomes" id="UP000005640">
    <property type="component" value="Chromosome 4"/>
</dbReference>
<dbReference type="RNAct" id="Q04756">
    <property type="molecule type" value="protein"/>
</dbReference>
<dbReference type="Bgee" id="ENSG00000109758">
    <property type="expression patterns" value="Expressed in right lobe of liver and 89 other cell types or tissues"/>
</dbReference>
<dbReference type="ExpressionAtlas" id="Q04756">
    <property type="expression patterns" value="baseline and differential"/>
</dbReference>
<dbReference type="GO" id="GO:0005829">
    <property type="term" value="C:cytosol"/>
    <property type="evidence" value="ECO:0000304"/>
    <property type="project" value="Reactome"/>
</dbReference>
<dbReference type="GO" id="GO:0005576">
    <property type="term" value="C:extracellular region"/>
    <property type="evidence" value="ECO:0000304"/>
    <property type="project" value="ProtInc"/>
</dbReference>
<dbReference type="GO" id="GO:0005615">
    <property type="term" value="C:extracellular space"/>
    <property type="evidence" value="ECO:0000318"/>
    <property type="project" value="GO_Central"/>
</dbReference>
<dbReference type="GO" id="GO:0005791">
    <property type="term" value="C:rough endoplasmic reticulum"/>
    <property type="evidence" value="ECO:0000318"/>
    <property type="project" value="GO_Central"/>
</dbReference>
<dbReference type="GO" id="GO:0004252">
    <property type="term" value="F:serine-type endopeptidase activity"/>
    <property type="evidence" value="ECO:0000318"/>
    <property type="project" value="GO_Central"/>
</dbReference>
<dbReference type="GO" id="GO:0008236">
    <property type="term" value="F:serine-type peptidase activity"/>
    <property type="evidence" value="ECO:0000304"/>
    <property type="project" value="ProtInc"/>
</dbReference>
<dbReference type="GO" id="GO:0007596">
    <property type="term" value="P:blood coagulation"/>
    <property type="evidence" value="ECO:0000318"/>
    <property type="project" value="GO_Central"/>
</dbReference>
<dbReference type="GO" id="GO:0006508">
    <property type="term" value="P:proteolysis"/>
    <property type="evidence" value="ECO:0000304"/>
    <property type="project" value="ProtInc"/>
</dbReference>
<dbReference type="GO" id="GO:0031638">
    <property type="term" value="P:zymogen activation"/>
    <property type="evidence" value="ECO:0000318"/>
    <property type="project" value="GO_Central"/>
</dbReference>
<dbReference type="CDD" id="cd00054">
    <property type="entry name" value="EGF_CA"/>
    <property type="match status" value="2"/>
</dbReference>
<dbReference type="CDD" id="cd00061">
    <property type="entry name" value="FN1"/>
    <property type="match status" value="1"/>
</dbReference>
<dbReference type="CDD" id="cd00062">
    <property type="entry name" value="FN2"/>
    <property type="match status" value="1"/>
</dbReference>
<dbReference type="CDD" id="cd00108">
    <property type="entry name" value="KR"/>
    <property type="match status" value="1"/>
</dbReference>
<dbReference type="CDD" id="cd00190">
    <property type="entry name" value="Tryp_SPc"/>
    <property type="match status" value="1"/>
</dbReference>
<dbReference type="FunFam" id="2.10.25.10:FF:000438">
    <property type="entry name" value="Hepatocyte growth factor activator"/>
    <property type="match status" value="1"/>
</dbReference>
<dbReference type="FunFam" id="2.40.10.10:FF:000061">
    <property type="entry name" value="Hepatocyte growth factor activator"/>
    <property type="match status" value="1"/>
</dbReference>
<dbReference type="FunFam" id="2.10.10.10:FF:000007">
    <property type="entry name" value="hepatocyte growth factor activator"/>
    <property type="match status" value="1"/>
</dbReference>
<dbReference type="FunFam" id="2.10.25.10:FF:000338">
    <property type="entry name" value="hepatocyte growth factor activator"/>
    <property type="match status" value="1"/>
</dbReference>
<dbReference type="FunFam" id="2.40.20.10:FF:000001">
    <property type="entry name" value="Urokinase-type plasminogen activator"/>
    <property type="match status" value="1"/>
</dbReference>
<dbReference type="Gene3D" id="2.10.10.10">
    <property type="entry name" value="Fibronectin, type II, collagen-binding"/>
    <property type="match status" value="1"/>
</dbReference>
<dbReference type="Gene3D" id="2.10.25.10">
    <property type="entry name" value="Laminin"/>
    <property type="match status" value="2"/>
</dbReference>
<dbReference type="Gene3D" id="2.40.20.10">
    <property type="entry name" value="Plasminogen Kringle 4"/>
    <property type="match status" value="1"/>
</dbReference>
<dbReference type="Gene3D" id="2.40.10.10">
    <property type="entry name" value="Trypsin-like serine proteases"/>
    <property type="match status" value="1"/>
</dbReference>
<dbReference type="InterPro" id="IPR014394">
    <property type="entry name" value="Coagulation_fac_XII/HGFA"/>
</dbReference>
<dbReference type="InterPro" id="IPR000742">
    <property type="entry name" value="EGF-like_dom"/>
</dbReference>
<dbReference type="InterPro" id="IPR000083">
    <property type="entry name" value="Fibronectin_type1"/>
</dbReference>
<dbReference type="InterPro" id="IPR000562">
    <property type="entry name" value="FN_type2_dom"/>
</dbReference>
<dbReference type="InterPro" id="IPR036943">
    <property type="entry name" value="FN_type2_sf"/>
</dbReference>
<dbReference type="InterPro" id="IPR000001">
    <property type="entry name" value="Kringle"/>
</dbReference>
<dbReference type="InterPro" id="IPR013806">
    <property type="entry name" value="Kringle-like"/>
</dbReference>
<dbReference type="InterPro" id="IPR018056">
    <property type="entry name" value="Kringle_CS"/>
</dbReference>
<dbReference type="InterPro" id="IPR038178">
    <property type="entry name" value="Kringle_sf"/>
</dbReference>
<dbReference type="InterPro" id="IPR009003">
    <property type="entry name" value="Peptidase_S1_PA"/>
</dbReference>
<dbReference type="InterPro" id="IPR043504">
    <property type="entry name" value="Peptidase_S1_PA_chymotrypsin"/>
</dbReference>
<dbReference type="InterPro" id="IPR001314">
    <property type="entry name" value="Peptidase_S1A"/>
</dbReference>
<dbReference type="InterPro" id="IPR050127">
    <property type="entry name" value="Serine_Proteases_S1"/>
</dbReference>
<dbReference type="InterPro" id="IPR001254">
    <property type="entry name" value="Trypsin_dom"/>
</dbReference>
<dbReference type="InterPro" id="IPR018114">
    <property type="entry name" value="TRYPSIN_HIS"/>
</dbReference>
<dbReference type="InterPro" id="IPR033116">
    <property type="entry name" value="TRYPSIN_SER"/>
</dbReference>
<dbReference type="PANTHER" id="PTHR24264:SF43">
    <property type="entry name" value="HEPATOCYTE GROWTH FACTOR ACTIVATOR"/>
    <property type="match status" value="1"/>
</dbReference>
<dbReference type="PANTHER" id="PTHR24264">
    <property type="entry name" value="TRYPSIN-RELATED"/>
    <property type="match status" value="1"/>
</dbReference>
<dbReference type="Pfam" id="PF00008">
    <property type="entry name" value="EGF"/>
    <property type="match status" value="2"/>
</dbReference>
<dbReference type="Pfam" id="PF00040">
    <property type="entry name" value="fn2"/>
    <property type="match status" value="1"/>
</dbReference>
<dbReference type="Pfam" id="PF00051">
    <property type="entry name" value="Kringle"/>
    <property type="match status" value="1"/>
</dbReference>
<dbReference type="Pfam" id="PF00089">
    <property type="entry name" value="Trypsin"/>
    <property type="match status" value="1"/>
</dbReference>
<dbReference type="PIRSF" id="PIRSF001146">
    <property type="entry name" value="Factor_XII_HGFA"/>
    <property type="match status" value="1"/>
</dbReference>
<dbReference type="PRINTS" id="PR00722">
    <property type="entry name" value="CHYMOTRYPSIN"/>
</dbReference>
<dbReference type="PRINTS" id="PR00013">
    <property type="entry name" value="FNTYPEII"/>
</dbReference>
<dbReference type="PRINTS" id="PR00018">
    <property type="entry name" value="KRINGLE"/>
</dbReference>
<dbReference type="SMART" id="SM00181">
    <property type="entry name" value="EGF"/>
    <property type="match status" value="2"/>
</dbReference>
<dbReference type="SMART" id="SM00058">
    <property type="entry name" value="FN1"/>
    <property type="match status" value="1"/>
</dbReference>
<dbReference type="SMART" id="SM00059">
    <property type="entry name" value="FN2"/>
    <property type="match status" value="1"/>
</dbReference>
<dbReference type="SMART" id="SM00130">
    <property type="entry name" value="KR"/>
    <property type="match status" value="1"/>
</dbReference>
<dbReference type="SMART" id="SM00020">
    <property type="entry name" value="Tryp_SPc"/>
    <property type="match status" value="1"/>
</dbReference>
<dbReference type="SUPFAM" id="SSF57196">
    <property type="entry name" value="EGF/Laminin"/>
    <property type="match status" value="1"/>
</dbReference>
<dbReference type="SUPFAM" id="SSF57440">
    <property type="entry name" value="Kringle-like"/>
    <property type="match status" value="2"/>
</dbReference>
<dbReference type="SUPFAM" id="SSF50494">
    <property type="entry name" value="Trypsin-like serine proteases"/>
    <property type="match status" value="1"/>
</dbReference>
<dbReference type="PROSITE" id="PS00022">
    <property type="entry name" value="EGF_1"/>
    <property type="match status" value="2"/>
</dbReference>
<dbReference type="PROSITE" id="PS01186">
    <property type="entry name" value="EGF_2"/>
    <property type="match status" value="1"/>
</dbReference>
<dbReference type="PROSITE" id="PS50026">
    <property type="entry name" value="EGF_3"/>
    <property type="match status" value="2"/>
</dbReference>
<dbReference type="PROSITE" id="PS01253">
    <property type="entry name" value="FN1_1"/>
    <property type="match status" value="1"/>
</dbReference>
<dbReference type="PROSITE" id="PS51091">
    <property type="entry name" value="FN1_2"/>
    <property type="match status" value="1"/>
</dbReference>
<dbReference type="PROSITE" id="PS00023">
    <property type="entry name" value="FN2_1"/>
    <property type="match status" value="1"/>
</dbReference>
<dbReference type="PROSITE" id="PS51092">
    <property type="entry name" value="FN2_2"/>
    <property type="match status" value="1"/>
</dbReference>
<dbReference type="PROSITE" id="PS00021">
    <property type="entry name" value="KRINGLE_1"/>
    <property type="match status" value="1"/>
</dbReference>
<dbReference type="PROSITE" id="PS50070">
    <property type="entry name" value="KRINGLE_2"/>
    <property type="match status" value="1"/>
</dbReference>
<dbReference type="PROSITE" id="PS50240">
    <property type="entry name" value="TRYPSIN_DOM"/>
    <property type="match status" value="1"/>
</dbReference>
<dbReference type="PROSITE" id="PS00134">
    <property type="entry name" value="TRYPSIN_HIS"/>
    <property type="match status" value="1"/>
</dbReference>
<dbReference type="PROSITE" id="PS00135">
    <property type="entry name" value="TRYPSIN_SER"/>
    <property type="match status" value="1"/>
</dbReference>
<keyword id="KW-0002">3D-structure</keyword>
<keyword id="KW-0903">Direct protein sequencing</keyword>
<keyword id="KW-1015">Disulfide bond</keyword>
<keyword id="KW-0245">EGF-like domain</keyword>
<keyword id="KW-0325">Glycoprotein</keyword>
<keyword id="KW-0378">Hydrolase</keyword>
<keyword id="KW-0420">Kringle</keyword>
<keyword id="KW-0645">Protease</keyword>
<keyword id="KW-1267">Proteomics identification</keyword>
<keyword id="KW-1185">Reference proteome</keyword>
<keyword id="KW-0677">Repeat</keyword>
<keyword id="KW-0964">Secreted</keyword>
<keyword id="KW-0720">Serine protease</keyword>
<keyword id="KW-0732">Signal</keyword>
<keyword id="KW-0865">Zymogen</keyword>
<organism>
    <name type="scientific">Homo sapiens</name>
    <name type="common">Human</name>
    <dbReference type="NCBI Taxonomy" id="9606"/>
    <lineage>
        <taxon>Eukaryota</taxon>
        <taxon>Metazoa</taxon>
        <taxon>Chordata</taxon>
        <taxon>Craniata</taxon>
        <taxon>Vertebrata</taxon>
        <taxon>Euteleostomi</taxon>
        <taxon>Mammalia</taxon>
        <taxon>Eutheria</taxon>
        <taxon>Euarchontoglires</taxon>
        <taxon>Primates</taxon>
        <taxon>Haplorrhini</taxon>
        <taxon>Catarrhini</taxon>
        <taxon>Hominidae</taxon>
        <taxon>Homo</taxon>
    </lineage>
</organism>
<proteinExistence type="evidence at protein level"/>
<name>HGFA_HUMAN</name>
<reference key="1">
    <citation type="journal article" date="1993" name="J. Biol. Chem.">
        <title>Molecular cloning and sequence analysis of the cDNA for a human serine protease responsible for activation of hepatocyte growth factor. Structural similarity of the protease precursor to blood coagulation factor XII.</title>
        <authorList>
            <person name="Miyazawa K."/>
            <person name="Shimomura T."/>
            <person name="Kitamura A."/>
            <person name="Kondo J."/>
            <person name="Morimoto Y."/>
            <person name="Kitamura N."/>
        </authorList>
    </citation>
    <scope>NUCLEOTIDE SEQUENCE [MRNA]</scope>
    <scope>PROTEIN SEQUENCE OF 373-379 AND 408-420</scope>
    <scope>SUBUNIT</scope>
    <scope>SUBCELLULAR LOCATION</scope>
    <scope>PROTEOLYTIC PROCESSING</scope>
    <source>
        <tissue>Liver</tissue>
        <tissue>Serum</tissue>
    </source>
</reference>
<reference key="2">
    <citation type="journal article" date="1998" name="Eur. J. Biochem.">
        <title>Structural organization and chromosomal localization of the human hepatocyte growth factor activator gene -- phylogenetic and functional relationship with blood coagulation factor XII, urokinase, and tissue-type plasminogen activator.</title>
        <authorList>
            <person name="Miyazawa K."/>
            <person name="Wang Y."/>
            <person name="Minoshima S."/>
            <person name="Shimizu N."/>
            <person name="Kitamura N."/>
        </authorList>
    </citation>
    <scope>NUCLEOTIDE SEQUENCE [GENOMIC DNA]</scope>
</reference>
<reference key="3">
    <citation type="journal article" date="2005" name="Nature">
        <title>Generation and annotation of the DNA sequences of human chromosomes 2 and 4.</title>
        <authorList>
            <person name="Hillier L.W."/>
            <person name="Graves T.A."/>
            <person name="Fulton R.S."/>
            <person name="Fulton L.A."/>
            <person name="Pepin K.H."/>
            <person name="Minx P."/>
            <person name="Wagner-McPherson C."/>
            <person name="Layman D."/>
            <person name="Wylie K."/>
            <person name="Sekhon M."/>
            <person name="Becker M.C."/>
            <person name="Fewell G.A."/>
            <person name="Delehaunty K.D."/>
            <person name="Miner T.L."/>
            <person name="Nash W.E."/>
            <person name="Kremitzki C."/>
            <person name="Oddy L."/>
            <person name="Du H."/>
            <person name="Sun H."/>
            <person name="Bradshaw-Cordum H."/>
            <person name="Ali J."/>
            <person name="Carter J."/>
            <person name="Cordes M."/>
            <person name="Harris A."/>
            <person name="Isak A."/>
            <person name="van Brunt A."/>
            <person name="Nguyen C."/>
            <person name="Du F."/>
            <person name="Courtney L."/>
            <person name="Kalicki J."/>
            <person name="Ozersky P."/>
            <person name="Abbott S."/>
            <person name="Armstrong J."/>
            <person name="Belter E.A."/>
            <person name="Caruso L."/>
            <person name="Cedroni M."/>
            <person name="Cotton M."/>
            <person name="Davidson T."/>
            <person name="Desai A."/>
            <person name="Elliott G."/>
            <person name="Erb T."/>
            <person name="Fronick C."/>
            <person name="Gaige T."/>
            <person name="Haakenson W."/>
            <person name="Haglund K."/>
            <person name="Holmes A."/>
            <person name="Harkins R."/>
            <person name="Kim K."/>
            <person name="Kruchowski S.S."/>
            <person name="Strong C.M."/>
            <person name="Grewal N."/>
            <person name="Goyea E."/>
            <person name="Hou S."/>
            <person name="Levy A."/>
            <person name="Martinka S."/>
            <person name="Mead K."/>
            <person name="McLellan M.D."/>
            <person name="Meyer R."/>
            <person name="Randall-Maher J."/>
            <person name="Tomlinson C."/>
            <person name="Dauphin-Kohlberg S."/>
            <person name="Kozlowicz-Reilly A."/>
            <person name="Shah N."/>
            <person name="Swearengen-Shahid S."/>
            <person name="Snider J."/>
            <person name="Strong J.T."/>
            <person name="Thompson J."/>
            <person name="Yoakum M."/>
            <person name="Leonard S."/>
            <person name="Pearman C."/>
            <person name="Trani L."/>
            <person name="Radionenko M."/>
            <person name="Waligorski J.E."/>
            <person name="Wang C."/>
            <person name="Rock S.M."/>
            <person name="Tin-Wollam A.-M."/>
            <person name="Maupin R."/>
            <person name="Latreille P."/>
            <person name="Wendl M.C."/>
            <person name="Yang S.-P."/>
            <person name="Pohl C."/>
            <person name="Wallis J.W."/>
            <person name="Spieth J."/>
            <person name="Bieri T.A."/>
            <person name="Berkowicz N."/>
            <person name="Nelson J.O."/>
            <person name="Osborne J."/>
            <person name="Ding L."/>
            <person name="Meyer R."/>
            <person name="Sabo A."/>
            <person name="Shotland Y."/>
            <person name="Sinha P."/>
            <person name="Wohldmann P.E."/>
            <person name="Cook L.L."/>
            <person name="Hickenbotham M.T."/>
            <person name="Eldred J."/>
            <person name="Williams D."/>
            <person name="Jones T.A."/>
            <person name="She X."/>
            <person name="Ciccarelli F.D."/>
            <person name="Izaurralde E."/>
            <person name="Taylor J."/>
            <person name="Schmutz J."/>
            <person name="Myers R.M."/>
            <person name="Cox D.R."/>
            <person name="Huang X."/>
            <person name="McPherson J.D."/>
            <person name="Mardis E.R."/>
            <person name="Clifton S.W."/>
            <person name="Warren W.C."/>
            <person name="Chinwalla A.T."/>
            <person name="Eddy S.R."/>
            <person name="Marra M.A."/>
            <person name="Ovcharenko I."/>
            <person name="Furey T.S."/>
            <person name="Miller W."/>
            <person name="Eichler E.E."/>
            <person name="Bork P."/>
            <person name="Suyama M."/>
            <person name="Torrents D."/>
            <person name="Waterston R.H."/>
            <person name="Wilson R.K."/>
        </authorList>
    </citation>
    <scope>NUCLEOTIDE SEQUENCE [LARGE SCALE GENOMIC DNA]</scope>
</reference>
<reference key="4">
    <citation type="submission" date="2005-09" db="EMBL/GenBank/DDBJ databases">
        <authorList>
            <person name="Mural R.J."/>
            <person name="Istrail S."/>
            <person name="Sutton G.G."/>
            <person name="Florea L."/>
            <person name="Halpern A.L."/>
            <person name="Mobarry C.M."/>
            <person name="Lippert R."/>
            <person name="Walenz B."/>
            <person name="Shatkay H."/>
            <person name="Dew I."/>
            <person name="Miller J.R."/>
            <person name="Flanigan M.J."/>
            <person name="Edwards N.J."/>
            <person name="Bolanos R."/>
            <person name="Fasulo D."/>
            <person name="Halldorsson B.V."/>
            <person name="Hannenhalli S."/>
            <person name="Turner R."/>
            <person name="Yooseph S."/>
            <person name="Lu F."/>
            <person name="Nusskern D.R."/>
            <person name="Shue B.C."/>
            <person name="Zheng X.H."/>
            <person name="Zhong F."/>
            <person name="Delcher A.L."/>
            <person name="Huson D.H."/>
            <person name="Kravitz S.A."/>
            <person name="Mouchard L."/>
            <person name="Reinert K."/>
            <person name="Remington K.A."/>
            <person name="Clark A.G."/>
            <person name="Waterman M.S."/>
            <person name="Eichler E.E."/>
            <person name="Adams M.D."/>
            <person name="Hunkapiller M.W."/>
            <person name="Myers E.W."/>
            <person name="Venter J.C."/>
        </authorList>
    </citation>
    <scope>NUCLEOTIDE SEQUENCE [LARGE SCALE GENOMIC DNA]</scope>
</reference>
<reference key="5">
    <citation type="journal article" date="2004" name="Genome Res.">
        <title>The status, quality, and expansion of the NIH full-length cDNA project: the Mammalian Gene Collection (MGC).</title>
        <authorList>
            <consortium name="The MGC Project Team"/>
        </authorList>
    </citation>
    <scope>NUCLEOTIDE SEQUENCE [LARGE SCALE MRNA]</scope>
    <scope>VARIANT LEU-231</scope>
    <source>
        <tissue>Liver</tissue>
    </source>
</reference>
<reference key="6">
    <citation type="journal article" date="2004" name="Protein Sci.">
        <title>Signal peptide prediction based on analysis of experimentally verified cleavage sites.</title>
        <authorList>
            <person name="Zhang Z."/>
            <person name="Henzel W.J."/>
        </authorList>
    </citation>
    <scope>PROTEIN SEQUENCE OF 36-50</scope>
</reference>
<reference key="7">
    <citation type="journal article" date="1993" name="J. Biol. Chem.">
        <title>Activation of the zymogen of hepatocyte growth factor activator by thrombin.</title>
        <authorList>
            <person name="Shimomura T."/>
            <person name="Kondo J."/>
            <person name="Ochiai M."/>
            <person name="Naka D."/>
            <person name="Miyazawa K."/>
            <person name="Morimoto Y."/>
            <person name="Kitamura N."/>
        </authorList>
    </citation>
    <scope>PROTEIN SEQUENCE OF 89-92; 373-377 AND 408-411</scope>
    <scope>FUNCTION</scope>
    <scope>PROTEOLYTIC PROCESSING</scope>
    <scope>SUBCELLULAR LOCATION</scope>
</reference>
<reference key="8">
    <citation type="journal article" date="2005" name="J. Proteome Res.">
        <title>Human plasma N-glycoproteome analysis by immunoaffinity subtraction, hydrazide chemistry, and mass spectrometry.</title>
        <authorList>
            <person name="Liu T."/>
            <person name="Qian W.-J."/>
            <person name="Gritsenko M.A."/>
            <person name="Camp D.G. II"/>
            <person name="Monroe M.E."/>
            <person name="Moore R.J."/>
            <person name="Smith R.D."/>
        </authorList>
    </citation>
    <scope>GLYCOSYLATION [LARGE SCALE ANALYSIS] AT ASN-468</scope>
    <source>
        <tissue>Plasma</tissue>
    </source>
</reference>
<reference key="9">
    <citation type="journal article" date="2009" name="J. Proteome Res.">
        <title>Glycoproteomics analysis of human liver tissue by combination of multiple enzyme digestion and hydrazide chemistry.</title>
        <authorList>
            <person name="Chen R."/>
            <person name="Jiang X."/>
            <person name="Sun D."/>
            <person name="Han G."/>
            <person name="Wang F."/>
            <person name="Ye M."/>
            <person name="Wang L."/>
            <person name="Zou H."/>
        </authorList>
    </citation>
    <scope>GLYCOSYLATION [LARGE SCALE ANALYSIS] AT ASN-468</scope>
    <source>
        <tissue>Liver</tissue>
    </source>
</reference>
<reference evidence="18 19" key="10">
    <citation type="journal article" date="2005" name="J. Mol. Biol.">
        <title>Conformational lability in serine protease active sites: structures of hepatocyte growth factor activator (HGFA) alone and with the inhibitory domain from HGFA inhibitor-1B.</title>
        <authorList>
            <person name="Shia S."/>
            <person name="Stamos J."/>
            <person name="Kirchhofer D."/>
            <person name="Fan B."/>
            <person name="Wu J."/>
            <person name="Corpuz R.T."/>
            <person name="Santell L."/>
            <person name="Lazarus R.A."/>
            <person name="Eigenbrot C."/>
        </authorList>
    </citation>
    <scope>X-RAY CRYSTALLOGRAPHY (2.6 ANGSTROMS) OF 373-655 ALONE AND IN COMPLEX WITH INHIBITOR HAI1B</scope>
    <scope>ACTIVE SITE</scope>
    <scope>DISULFIDE BONDS</scope>
    <scope>GLYCOSYLATION AT ASN-468</scope>
    <scope>SUBUNIT</scope>
</reference>
<reference evidence="20 21" key="11">
    <citation type="journal article" date="2007" name="Proc. Natl. Acad. Sci. U.S.A.">
        <title>Structural insight into distinct mechanisms of protease inhibition by antibodies.</title>
        <authorList>
            <person name="Wu Y."/>
            <person name="Eigenbrot C."/>
            <person name="Liang W.C."/>
            <person name="Stawicki S."/>
            <person name="Shia S."/>
            <person name="Fan B."/>
            <person name="Ganesan R."/>
            <person name="Lipari M.T."/>
            <person name="Kirchhofer D."/>
        </authorList>
    </citation>
    <scope>X-RAY CRYSTALLOGRAPHY (2.2 ANGSTROMS) OF 373-655 IN COMPLEX WITH ANTIBODY</scope>
    <scope>DISULFIDE BONDS</scope>
    <scope>SUBUNIT</scope>
</reference>
<gene>
    <name evidence="17" type="primary">HGFAC</name>
</gene>